<protein>
    <recommendedName>
        <fullName evidence="1">Phosphoribosylaminoimidazole-succinocarboxamide synthase</fullName>
        <ecNumber evidence="1">6.3.2.6</ecNumber>
    </recommendedName>
    <alternativeName>
        <fullName evidence="1">SAICAR synthetase</fullName>
    </alternativeName>
</protein>
<accession>Q5M6J8</accession>
<name>PUR7_STRT2</name>
<organism>
    <name type="scientific">Streptococcus thermophilus (strain ATCC BAA-250 / LMG 18311)</name>
    <dbReference type="NCBI Taxonomy" id="264199"/>
    <lineage>
        <taxon>Bacteria</taxon>
        <taxon>Bacillati</taxon>
        <taxon>Bacillota</taxon>
        <taxon>Bacilli</taxon>
        <taxon>Lactobacillales</taxon>
        <taxon>Streptococcaceae</taxon>
        <taxon>Streptococcus</taxon>
    </lineage>
</organism>
<feature type="chain" id="PRO_1000018796" description="Phosphoribosylaminoimidazole-succinocarboxamide synthase">
    <location>
        <begin position="1"/>
        <end position="235"/>
    </location>
</feature>
<sequence>MSNQLIYTGKAKDIYSTEDENVIKSVYKDQATMLNGARKETIKGKGVLNNQISSLIFEKLNAAGVATHFIKRISDTEQLNKKVTIIPLEVVLRNVTAGSFSKRFGVEEGLDLKTPIVEFYYKNDDLDDPFINDEHVKFLDIANDEQIAYIKEETRRINELLKDWFEQIGLRLIDFKLEFGFDKDGKIILADEFSPDNCRLWDAEGHHMDKDVFRRDLGSLTDVYEVVLEKLQGLK</sequence>
<keyword id="KW-0067">ATP-binding</keyword>
<keyword id="KW-0436">Ligase</keyword>
<keyword id="KW-0547">Nucleotide-binding</keyword>
<keyword id="KW-0658">Purine biosynthesis</keyword>
<keyword id="KW-1185">Reference proteome</keyword>
<reference key="1">
    <citation type="journal article" date="2004" name="Nat. Biotechnol.">
        <title>Complete sequence and comparative genome analysis of the dairy bacterium Streptococcus thermophilus.</title>
        <authorList>
            <person name="Bolotin A."/>
            <person name="Quinquis B."/>
            <person name="Renault P."/>
            <person name="Sorokin A."/>
            <person name="Ehrlich S.D."/>
            <person name="Kulakauskas S."/>
            <person name="Lapidus A."/>
            <person name="Goltsman E."/>
            <person name="Mazur M."/>
            <person name="Pusch G.D."/>
            <person name="Fonstein M."/>
            <person name="Overbeek R."/>
            <person name="Kyprides N."/>
            <person name="Purnelle B."/>
            <person name="Prozzi D."/>
            <person name="Ngui K."/>
            <person name="Masuy D."/>
            <person name="Hancy F."/>
            <person name="Burteau S."/>
            <person name="Boutry M."/>
            <person name="Delcour J."/>
            <person name="Goffeau A."/>
            <person name="Hols P."/>
        </authorList>
    </citation>
    <scope>NUCLEOTIDE SEQUENCE [LARGE SCALE GENOMIC DNA]</scope>
    <source>
        <strain>ATCC BAA-250 / LMG 18311</strain>
    </source>
</reference>
<comment type="catalytic activity">
    <reaction evidence="1">
        <text>5-amino-1-(5-phospho-D-ribosyl)imidazole-4-carboxylate + L-aspartate + ATP = (2S)-2-[5-amino-1-(5-phospho-beta-D-ribosyl)imidazole-4-carboxamido]succinate + ADP + phosphate + 2 H(+)</text>
        <dbReference type="Rhea" id="RHEA:22628"/>
        <dbReference type="ChEBI" id="CHEBI:15378"/>
        <dbReference type="ChEBI" id="CHEBI:29991"/>
        <dbReference type="ChEBI" id="CHEBI:30616"/>
        <dbReference type="ChEBI" id="CHEBI:43474"/>
        <dbReference type="ChEBI" id="CHEBI:58443"/>
        <dbReference type="ChEBI" id="CHEBI:77657"/>
        <dbReference type="ChEBI" id="CHEBI:456216"/>
        <dbReference type="EC" id="6.3.2.6"/>
    </reaction>
</comment>
<comment type="pathway">
    <text evidence="1">Purine metabolism; IMP biosynthesis via de novo pathway; 5-amino-1-(5-phospho-D-ribosyl)imidazole-4-carboxamide from 5-amino-1-(5-phospho-D-ribosyl)imidazole-4-carboxylate: step 1/2.</text>
</comment>
<comment type="similarity">
    <text evidence="1">Belongs to the SAICAR synthetase family.</text>
</comment>
<evidence type="ECO:0000255" key="1">
    <source>
        <dbReference type="HAMAP-Rule" id="MF_00137"/>
    </source>
</evidence>
<gene>
    <name evidence="1" type="primary">purC</name>
    <name type="ordered locus">stu0030</name>
</gene>
<proteinExistence type="inferred from homology"/>
<dbReference type="EC" id="6.3.2.6" evidence="1"/>
<dbReference type="EMBL" id="CP000023">
    <property type="protein sequence ID" value="AAV59760.1"/>
    <property type="molecule type" value="Genomic_DNA"/>
</dbReference>
<dbReference type="RefSeq" id="WP_011225260.1">
    <property type="nucleotide sequence ID" value="NC_006448.1"/>
</dbReference>
<dbReference type="SMR" id="Q5M6J8"/>
<dbReference type="STRING" id="264199.stu0030"/>
<dbReference type="GeneID" id="66897950"/>
<dbReference type="KEGG" id="stl:stu0030"/>
<dbReference type="PATRIC" id="fig|264199.4.peg.32"/>
<dbReference type="eggNOG" id="COG0152">
    <property type="taxonomic scope" value="Bacteria"/>
</dbReference>
<dbReference type="HOGENOM" id="CLU_061495_2_0_9"/>
<dbReference type="UniPathway" id="UPA00074">
    <property type="reaction ID" value="UER00131"/>
</dbReference>
<dbReference type="Proteomes" id="UP000001170">
    <property type="component" value="Chromosome"/>
</dbReference>
<dbReference type="GO" id="GO:0005524">
    <property type="term" value="F:ATP binding"/>
    <property type="evidence" value="ECO:0007669"/>
    <property type="project" value="UniProtKB-KW"/>
</dbReference>
<dbReference type="GO" id="GO:0004639">
    <property type="term" value="F:phosphoribosylaminoimidazolesuccinocarboxamide synthase activity"/>
    <property type="evidence" value="ECO:0007669"/>
    <property type="project" value="UniProtKB-UniRule"/>
</dbReference>
<dbReference type="GO" id="GO:0006189">
    <property type="term" value="P:'de novo' IMP biosynthetic process"/>
    <property type="evidence" value="ECO:0007669"/>
    <property type="project" value="UniProtKB-UniRule"/>
</dbReference>
<dbReference type="GO" id="GO:0009236">
    <property type="term" value="P:cobalamin biosynthetic process"/>
    <property type="evidence" value="ECO:0007669"/>
    <property type="project" value="InterPro"/>
</dbReference>
<dbReference type="CDD" id="cd01415">
    <property type="entry name" value="SAICAR_synt_PurC"/>
    <property type="match status" value="1"/>
</dbReference>
<dbReference type="FunFam" id="3.30.200.20:FF:000189">
    <property type="entry name" value="Phosphoribosylaminoimidazole-succinocarboxamide synthase"/>
    <property type="match status" value="1"/>
</dbReference>
<dbReference type="FunFam" id="3.30.470.20:FF:000006">
    <property type="entry name" value="Phosphoribosylaminoimidazole-succinocarboxamide synthase"/>
    <property type="match status" value="1"/>
</dbReference>
<dbReference type="Gene3D" id="3.30.470.20">
    <property type="entry name" value="ATP-grasp fold, B domain"/>
    <property type="match status" value="1"/>
</dbReference>
<dbReference type="Gene3D" id="3.30.200.20">
    <property type="entry name" value="Phosphorylase Kinase, domain 1"/>
    <property type="match status" value="1"/>
</dbReference>
<dbReference type="HAMAP" id="MF_00137">
    <property type="entry name" value="SAICAR_synth"/>
    <property type="match status" value="1"/>
</dbReference>
<dbReference type="InterPro" id="IPR028923">
    <property type="entry name" value="SAICAR_synt/ADE2_N"/>
</dbReference>
<dbReference type="InterPro" id="IPR033934">
    <property type="entry name" value="SAICAR_synt_PurC"/>
</dbReference>
<dbReference type="InterPro" id="IPR001636">
    <property type="entry name" value="SAICAR_synth"/>
</dbReference>
<dbReference type="InterPro" id="IPR050089">
    <property type="entry name" value="SAICAR_synthetase"/>
</dbReference>
<dbReference type="InterPro" id="IPR018236">
    <property type="entry name" value="SAICAR_synthetase_CS"/>
</dbReference>
<dbReference type="NCBIfam" id="TIGR00081">
    <property type="entry name" value="purC"/>
    <property type="match status" value="1"/>
</dbReference>
<dbReference type="PANTHER" id="PTHR43599">
    <property type="entry name" value="MULTIFUNCTIONAL PROTEIN ADE2"/>
    <property type="match status" value="1"/>
</dbReference>
<dbReference type="PANTHER" id="PTHR43599:SF3">
    <property type="entry name" value="SI:DKEY-6E2.2"/>
    <property type="match status" value="1"/>
</dbReference>
<dbReference type="Pfam" id="PF01259">
    <property type="entry name" value="SAICAR_synt"/>
    <property type="match status" value="1"/>
</dbReference>
<dbReference type="SUPFAM" id="SSF56104">
    <property type="entry name" value="SAICAR synthase-like"/>
    <property type="match status" value="1"/>
</dbReference>
<dbReference type="PROSITE" id="PS01057">
    <property type="entry name" value="SAICAR_SYNTHETASE_1"/>
    <property type="match status" value="1"/>
</dbReference>
<dbReference type="PROSITE" id="PS01058">
    <property type="entry name" value="SAICAR_SYNTHETASE_2"/>
    <property type="match status" value="1"/>
</dbReference>